<protein>
    <recommendedName>
        <fullName evidence="2">Protein YqhJ</fullName>
    </recommendedName>
</protein>
<sequence>MKYLAFLIKGKTTHFDVGK</sequence>
<organism>
    <name type="scientific">Escherichia coli (strain K12)</name>
    <dbReference type="NCBI Taxonomy" id="83333"/>
    <lineage>
        <taxon>Bacteria</taxon>
        <taxon>Pseudomonadati</taxon>
        <taxon>Pseudomonadota</taxon>
        <taxon>Gammaproteobacteria</taxon>
        <taxon>Enterobacterales</taxon>
        <taxon>Enterobacteriaceae</taxon>
        <taxon>Escherichia</taxon>
    </lineage>
</organism>
<name>YQHJ_ECOLI</name>
<comment type="induction">
    <text evidence="1">Expressed equally in exponential and stationary phase in rich medium (at protein level). A shorter isoform that starts downstream at a TTG codon (yielding a 13 residue peptide) may also be expressed.</text>
</comment>
<comment type="miscellaneous">
    <text evidence="1">Encoded antisense to yghE; it is entirely within the yghE coding region.</text>
</comment>
<dbReference type="EMBL" id="U00096">
    <property type="protein sequence ID" value="QNV50539.1"/>
    <property type="molecule type" value="Genomic_DNA"/>
</dbReference>
<dbReference type="InParanoid" id="P0DSG4"/>
<dbReference type="BioCyc" id="EcoCyc:MONOMER0-4498"/>
<dbReference type="Proteomes" id="UP000000625">
    <property type="component" value="Chromosome"/>
</dbReference>
<gene>
    <name evidence="2" type="primary">yqhJ</name>
    <name evidence="3" type="ordered locus">b4786</name>
</gene>
<reference key="1">
    <citation type="journal article" date="1997" name="Science">
        <title>The complete genome sequence of Escherichia coli K-12.</title>
        <authorList>
            <person name="Blattner F.R."/>
            <person name="Plunkett G. III"/>
            <person name="Bloch C.A."/>
            <person name="Perna N.T."/>
            <person name="Burland V."/>
            <person name="Riley M."/>
            <person name="Collado-Vides J."/>
            <person name="Glasner J.D."/>
            <person name="Rode C.K."/>
            <person name="Mayhew G.F."/>
            <person name="Gregor J."/>
            <person name="Davis N.W."/>
            <person name="Kirkpatrick H.A."/>
            <person name="Goeden M.A."/>
            <person name="Rose D.J."/>
            <person name="Mau B."/>
            <person name="Shao Y."/>
        </authorList>
    </citation>
    <scope>NUCLEOTIDE SEQUENCE [LARGE SCALE GENOMIC DNA]</scope>
    <source>
        <strain>K12 / MG1655 / ATCC 47076</strain>
    </source>
</reference>
<reference key="2">
    <citation type="journal article" date="2019" name="MBio">
        <title>Identifying small proteins by ribosome profiling with stalled initiation complexes.</title>
        <authorList>
            <person name="Weaver J."/>
            <person name="Mohammad F."/>
            <person name="Buskirk A.R."/>
            <person name="Storz G."/>
        </authorList>
    </citation>
    <scope>IDENTIFICATION</scope>
    <scope>INDUCTION</scope>
    <source>
        <strain>K12 / MG1655 / ATCC 47076</strain>
    </source>
</reference>
<accession>P0DSG4</accession>
<accession>A0A7H2C792</accession>
<feature type="chain" id="PRO_0000447164" description="Protein YqhJ">
    <location>
        <begin position="1"/>
        <end position="19"/>
    </location>
</feature>
<evidence type="ECO:0000269" key="1">
    <source>
    </source>
</evidence>
<evidence type="ECO:0000303" key="2">
    <source>
    </source>
</evidence>
<evidence type="ECO:0000312" key="3">
    <source>
        <dbReference type="EMBL" id="QNV50539.1"/>
    </source>
</evidence>
<proteinExistence type="evidence at protein level"/>
<keyword id="KW-1185">Reference proteome</keyword>